<dbReference type="EC" id="4.2.1.126" evidence="1"/>
<dbReference type="EMBL" id="CP000802">
    <property type="protein sequence ID" value="ABV06829.1"/>
    <property type="molecule type" value="Genomic_DNA"/>
</dbReference>
<dbReference type="RefSeq" id="WP_001159160.1">
    <property type="nucleotide sequence ID" value="NC_009800.1"/>
</dbReference>
<dbReference type="SMR" id="A8A2S5"/>
<dbReference type="KEGG" id="ecx:EcHS_A2564"/>
<dbReference type="HOGENOM" id="CLU_049049_1_1_6"/>
<dbReference type="UniPathway" id="UPA00342"/>
<dbReference type="UniPathway" id="UPA00343"/>
<dbReference type="UniPathway" id="UPA00544"/>
<dbReference type="GO" id="GO:0097367">
    <property type="term" value="F:carbohydrate derivative binding"/>
    <property type="evidence" value="ECO:0007669"/>
    <property type="project" value="InterPro"/>
</dbReference>
<dbReference type="GO" id="GO:0016835">
    <property type="term" value="F:carbon-oxygen lyase activity"/>
    <property type="evidence" value="ECO:0007669"/>
    <property type="project" value="UniProtKB-UniRule"/>
</dbReference>
<dbReference type="GO" id="GO:0016803">
    <property type="term" value="F:ether hydrolase activity"/>
    <property type="evidence" value="ECO:0007669"/>
    <property type="project" value="TreeGrafter"/>
</dbReference>
<dbReference type="GO" id="GO:0097175">
    <property type="term" value="P:1,6-anhydro-N-acetyl-beta-muramic acid catabolic process"/>
    <property type="evidence" value="ECO:0007669"/>
    <property type="project" value="UniProtKB-UniRule"/>
</dbReference>
<dbReference type="GO" id="GO:0046348">
    <property type="term" value="P:amino sugar catabolic process"/>
    <property type="evidence" value="ECO:0007669"/>
    <property type="project" value="InterPro"/>
</dbReference>
<dbReference type="GO" id="GO:0097173">
    <property type="term" value="P:N-acetylmuramic acid catabolic process"/>
    <property type="evidence" value="ECO:0007669"/>
    <property type="project" value="UniProtKB-UniPathway"/>
</dbReference>
<dbReference type="GO" id="GO:0009254">
    <property type="term" value="P:peptidoglycan turnover"/>
    <property type="evidence" value="ECO:0007669"/>
    <property type="project" value="UniProtKB-UniRule"/>
</dbReference>
<dbReference type="CDD" id="cd05007">
    <property type="entry name" value="SIS_Etherase"/>
    <property type="match status" value="1"/>
</dbReference>
<dbReference type="FunFam" id="1.10.8.1080:FF:000001">
    <property type="entry name" value="N-acetylmuramic acid 6-phosphate etherase"/>
    <property type="match status" value="1"/>
</dbReference>
<dbReference type="FunFam" id="3.40.50.10490:FF:000014">
    <property type="entry name" value="N-acetylmuramic acid 6-phosphate etherase"/>
    <property type="match status" value="1"/>
</dbReference>
<dbReference type="Gene3D" id="1.10.8.1080">
    <property type="match status" value="1"/>
</dbReference>
<dbReference type="Gene3D" id="3.40.50.10490">
    <property type="entry name" value="Glucose-6-phosphate isomerase like protein, domain 1"/>
    <property type="match status" value="1"/>
</dbReference>
<dbReference type="HAMAP" id="MF_00068">
    <property type="entry name" value="MurQ"/>
    <property type="match status" value="1"/>
</dbReference>
<dbReference type="InterPro" id="IPR005488">
    <property type="entry name" value="Etherase_MurQ"/>
</dbReference>
<dbReference type="InterPro" id="IPR005486">
    <property type="entry name" value="Glucokinase_regulatory_CS"/>
</dbReference>
<dbReference type="InterPro" id="IPR040190">
    <property type="entry name" value="MURQ/GCKR"/>
</dbReference>
<dbReference type="InterPro" id="IPR001347">
    <property type="entry name" value="SIS_dom"/>
</dbReference>
<dbReference type="InterPro" id="IPR046348">
    <property type="entry name" value="SIS_dom_sf"/>
</dbReference>
<dbReference type="NCBIfam" id="TIGR00274">
    <property type="entry name" value="N-acetylmuramic acid 6-phosphate etherase"/>
    <property type="match status" value="1"/>
</dbReference>
<dbReference type="NCBIfam" id="NF003915">
    <property type="entry name" value="PRK05441.1"/>
    <property type="match status" value="1"/>
</dbReference>
<dbReference type="NCBIfam" id="NF009222">
    <property type="entry name" value="PRK12570.1"/>
    <property type="match status" value="1"/>
</dbReference>
<dbReference type="PANTHER" id="PTHR10088">
    <property type="entry name" value="GLUCOKINASE REGULATORY PROTEIN"/>
    <property type="match status" value="1"/>
</dbReference>
<dbReference type="PANTHER" id="PTHR10088:SF4">
    <property type="entry name" value="GLUCOKINASE REGULATORY PROTEIN"/>
    <property type="match status" value="1"/>
</dbReference>
<dbReference type="Pfam" id="PF20741">
    <property type="entry name" value="GKRP-like_C"/>
    <property type="match status" value="1"/>
</dbReference>
<dbReference type="Pfam" id="PF22645">
    <property type="entry name" value="GKRP_SIS_N"/>
    <property type="match status" value="1"/>
</dbReference>
<dbReference type="SUPFAM" id="SSF53697">
    <property type="entry name" value="SIS domain"/>
    <property type="match status" value="1"/>
</dbReference>
<dbReference type="PROSITE" id="PS01272">
    <property type="entry name" value="GCKR"/>
    <property type="match status" value="1"/>
</dbReference>
<dbReference type="PROSITE" id="PS51464">
    <property type="entry name" value="SIS"/>
    <property type="match status" value="1"/>
</dbReference>
<keyword id="KW-0119">Carbohydrate metabolism</keyword>
<keyword id="KW-0456">Lyase</keyword>
<feature type="chain" id="PRO_1000057458" description="N-acetylmuramic acid 6-phosphate etherase">
    <location>
        <begin position="1"/>
        <end position="298"/>
    </location>
</feature>
<feature type="domain" description="SIS" evidence="1">
    <location>
        <begin position="55"/>
        <end position="218"/>
    </location>
</feature>
<feature type="active site" description="Proton donor" evidence="1">
    <location>
        <position position="83"/>
    </location>
</feature>
<feature type="active site" evidence="1">
    <location>
        <position position="114"/>
    </location>
</feature>
<comment type="function">
    <text evidence="1">Specifically catalyzes the cleavage of the D-lactyl ether substituent of MurNAc 6-phosphate, producing GlcNAc 6-phosphate and D-lactate. Together with AnmK, is also required for the utilization of anhydro-N-acetylmuramic acid (anhMurNAc) either imported from the medium or derived from its own cell wall murein, and thus plays a role in cell wall recycling.</text>
</comment>
<comment type="catalytic activity">
    <reaction evidence="1">
        <text>N-acetyl-D-muramate 6-phosphate + H2O = N-acetyl-D-glucosamine 6-phosphate + (R)-lactate</text>
        <dbReference type="Rhea" id="RHEA:26410"/>
        <dbReference type="ChEBI" id="CHEBI:15377"/>
        <dbReference type="ChEBI" id="CHEBI:16004"/>
        <dbReference type="ChEBI" id="CHEBI:57513"/>
        <dbReference type="ChEBI" id="CHEBI:58722"/>
        <dbReference type="EC" id="4.2.1.126"/>
    </reaction>
</comment>
<comment type="pathway">
    <text evidence="1">Amino-sugar metabolism; 1,6-anhydro-N-acetylmuramate degradation.</text>
</comment>
<comment type="pathway">
    <text evidence="1">Amino-sugar metabolism; N-acetylmuramate degradation.</text>
</comment>
<comment type="pathway">
    <text evidence="1">Cell wall biogenesis; peptidoglycan recycling.</text>
</comment>
<comment type="subunit">
    <text evidence="1">Homodimer.</text>
</comment>
<comment type="induction">
    <text evidence="1">Induced by MurNAc 6-phosphate that releases the repressor MurR from the DNA. Repressed by MurR in the absence of MurNAc 6-phosphate.</text>
</comment>
<comment type="miscellaneous">
    <text evidence="1">A lyase-type mechanism (elimination/hydration) is suggested for the cleavage of the lactyl ether bond of MurNAc 6-phosphate, with the formation of an alpha,beta-unsaturated aldehyde intermediate with (E)-stereochemistry, followed by the syn addition of water to give product.</text>
</comment>
<comment type="similarity">
    <text evidence="1">Belongs to the GCKR-like family. MurNAc-6-P etherase subfamily.</text>
</comment>
<proteinExistence type="inferred from homology"/>
<reference key="1">
    <citation type="journal article" date="2008" name="J. Bacteriol.">
        <title>The pangenome structure of Escherichia coli: comparative genomic analysis of E. coli commensal and pathogenic isolates.</title>
        <authorList>
            <person name="Rasko D.A."/>
            <person name="Rosovitz M.J."/>
            <person name="Myers G.S.A."/>
            <person name="Mongodin E.F."/>
            <person name="Fricke W.F."/>
            <person name="Gajer P."/>
            <person name="Crabtree J."/>
            <person name="Sebaihia M."/>
            <person name="Thomson N.R."/>
            <person name="Chaudhuri R."/>
            <person name="Henderson I.R."/>
            <person name="Sperandio V."/>
            <person name="Ravel J."/>
        </authorList>
    </citation>
    <scope>NUCLEOTIDE SEQUENCE [LARGE SCALE GENOMIC DNA]</scope>
    <source>
        <strain>HS</strain>
    </source>
</reference>
<name>MURQ_ECOHS</name>
<sequence>MQFEKMITEGSNTASAEIDRVSTLEMCRIINDEDKTVPLAVERVLPDIAAAIDVIHAQVSGGGRLIYLGAGTSGRLGILDASECPPTYGVKPGLVVGLIAGGEYAIQHAVEGAEDSREGGVNDLKNINLTAQDVVVGIAASGRTPYVIAGLEYARQLGCRTVGISCNPGSAVSTTAEFAITPIVGAEVVTGSSRMKAGTAQKLVLNMLSTGLMIKSGKVFGNLMVDVVATNEKLHVRQVNIVKNATGCSAEQAEAALIACERNCKTAIVMVLKNLDAAEAKKRLDQHGGFIRQVLDKE</sequence>
<organism>
    <name type="scientific">Escherichia coli O9:H4 (strain HS)</name>
    <dbReference type="NCBI Taxonomy" id="331112"/>
    <lineage>
        <taxon>Bacteria</taxon>
        <taxon>Pseudomonadati</taxon>
        <taxon>Pseudomonadota</taxon>
        <taxon>Gammaproteobacteria</taxon>
        <taxon>Enterobacterales</taxon>
        <taxon>Enterobacteriaceae</taxon>
        <taxon>Escherichia</taxon>
    </lineage>
</organism>
<protein>
    <recommendedName>
        <fullName evidence="1">N-acetylmuramic acid 6-phosphate etherase</fullName>
        <shortName evidence="1">MurNAc-6-P etherase</shortName>
        <ecNumber evidence="1">4.2.1.126</ecNumber>
    </recommendedName>
    <alternativeName>
        <fullName evidence="1">N-acetylmuramic acid 6-phosphate hydrolase</fullName>
    </alternativeName>
    <alternativeName>
        <fullName evidence="1">N-acetylmuramic acid 6-phosphate lyase</fullName>
    </alternativeName>
</protein>
<gene>
    <name evidence="1" type="primary">murQ</name>
    <name type="ordered locus">EcHS_A2564</name>
</gene>
<accession>A8A2S5</accession>
<evidence type="ECO:0000255" key="1">
    <source>
        <dbReference type="HAMAP-Rule" id="MF_00068"/>
    </source>
</evidence>